<comment type="function">
    <text evidence="1">Involved in the gluconeogenesis. Catalyzes stereospecifically the conversion of dihydroxyacetone phosphate (DHAP) to D-glyceraldehyde-3-phosphate (G3P).</text>
</comment>
<comment type="catalytic activity">
    <reaction evidence="1">
        <text>D-glyceraldehyde 3-phosphate = dihydroxyacetone phosphate</text>
        <dbReference type="Rhea" id="RHEA:18585"/>
        <dbReference type="ChEBI" id="CHEBI:57642"/>
        <dbReference type="ChEBI" id="CHEBI:59776"/>
        <dbReference type="EC" id="5.3.1.1"/>
    </reaction>
</comment>
<comment type="pathway">
    <text evidence="1">Carbohydrate biosynthesis; gluconeogenesis.</text>
</comment>
<comment type="pathway">
    <text evidence="1">Carbohydrate degradation; glycolysis; D-glyceraldehyde 3-phosphate from glycerone phosphate: step 1/1.</text>
</comment>
<comment type="subunit">
    <text evidence="1">Homodimer.</text>
</comment>
<comment type="subcellular location">
    <subcellularLocation>
        <location evidence="1">Cytoplasm</location>
    </subcellularLocation>
</comment>
<comment type="similarity">
    <text evidence="1">Belongs to the triosephosphate isomerase family.</text>
</comment>
<organism>
    <name type="scientific">Pelodictyon phaeoclathratiforme (strain DSM 5477 / BU-1)</name>
    <dbReference type="NCBI Taxonomy" id="324925"/>
    <lineage>
        <taxon>Bacteria</taxon>
        <taxon>Pseudomonadati</taxon>
        <taxon>Chlorobiota</taxon>
        <taxon>Chlorobiia</taxon>
        <taxon>Chlorobiales</taxon>
        <taxon>Chlorobiaceae</taxon>
        <taxon>Chlorobium/Pelodictyon group</taxon>
        <taxon>Pelodictyon</taxon>
    </lineage>
</organism>
<name>TPIS_PELPB</name>
<accession>B4SBF7</accession>
<sequence length="251" mass="26425">MRRKIVVGNWKMNNSVAESVQLATDVLAALGEGFSGCEVGIAPTYLALDATEKVIAESEVQLVAQNCHYENDGAFTGEVSARMILAVGCSSVIIGHSERRQYFGETNATVNLRIKKALSEGLNVILCVGETLAERESGVMETVISSQVREGLDGIIDISAIVIAYEPVWAIGTGKTASSAQAEEVHLFIRTLVTGLYGQTASEKVRIQYGGSVKPSNAAELFAMPNIDGGLIGGASLNADDFAAIVKAASV</sequence>
<keyword id="KW-0963">Cytoplasm</keyword>
<keyword id="KW-0312">Gluconeogenesis</keyword>
<keyword id="KW-0324">Glycolysis</keyword>
<keyword id="KW-0413">Isomerase</keyword>
<keyword id="KW-1185">Reference proteome</keyword>
<protein>
    <recommendedName>
        <fullName evidence="1">Triosephosphate isomerase</fullName>
        <shortName evidence="1">TIM</shortName>
        <shortName evidence="1">TPI</shortName>
        <ecNumber evidence="1">5.3.1.1</ecNumber>
    </recommendedName>
    <alternativeName>
        <fullName evidence="1">Triose-phosphate isomerase</fullName>
    </alternativeName>
</protein>
<gene>
    <name evidence="1" type="primary">tpiA</name>
    <name type="ordered locus">Ppha_1779</name>
</gene>
<evidence type="ECO:0000255" key="1">
    <source>
        <dbReference type="HAMAP-Rule" id="MF_00147"/>
    </source>
</evidence>
<feature type="chain" id="PRO_1000096518" description="Triosephosphate isomerase">
    <location>
        <begin position="1"/>
        <end position="251"/>
    </location>
</feature>
<feature type="active site" description="Electrophile" evidence="1">
    <location>
        <position position="96"/>
    </location>
</feature>
<feature type="active site" description="Proton acceptor" evidence="1">
    <location>
        <position position="166"/>
    </location>
</feature>
<feature type="binding site" evidence="1">
    <location>
        <begin position="9"/>
        <end position="11"/>
    </location>
    <ligand>
        <name>substrate</name>
    </ligand>
</feature>
<feature type="binding site" evidence="1">
    <location>
        <position position="172"/>
    </location>
    <ligand>
        <name>substrate</name>
    </ligand>
</feature>
<feature type="binding site" evidence="1">
    <location>
        <position position="212"/>
    </location>
    <ligand>
        <name>substrate</name>
    </ligand>
</feature>
<feature type="binding site" evidence="1">
    <location>
        <begin position="233"/>
        <end position="234"/>
    </location>
    <ligand>
        <name>substrate</name>
    </ligand>
</feature>
<dbReference type="EC" id="5.3.1.1" evidence="1"/>
<dbReference type="EMBL" id="CP001110">
    <property type="protein sequence ID" value="ACF44011.1"/>
    <property type="molecule type" value="Genomic_DNA"/>
</dbReference>
<dbReference type="RefSeq" id="WP_012508498.1">
    <property type="nucleotide sequence ID" value="NC_011060.1"/>
</dbReference>
<dbReference type="SMR" id="B4SBF7"/>
<dbReference type="STRING" id="324925.Ppha_1779"/>
<dbReference type="KEGG" id="pph:Ppha_1779"/>
<dbReference type="eggNOG" id="COG0149">
    <property type="taxonomic scope" value="Bacteria"/>
</dbReference>
<dbReference type="HOGENOM" id="CLU_024251_2_1_10"/>
<dbReference type="OrthoDB" id="9809429at2"/>
<dbReference type="UniPathway" id="UPA00109">
    <property type="reaction ID" value="UER00189"/>
</dbReference>
<dbReference type="UniPathway" id="UPA00138"/>
<dbReference type="Proteomes" id="UP000002724">
    <property type="component" value="Chromosome"/>
</dbReference>
<dbReference type="GO" id="GO:0005829">
    <property type="term" value="C:cytosol"/>
    <property type="evidence" value="ECO:0007669"/>
    <property type="project" value="TreeGrafter"/>
</dbReference>
<dbReference type="GO" id="GO:0004807">
    <property type="term" value="F:triose-phosphate isomerase activity"/>
    <property type="evidence" value="ECO:0007669"/>
    <property type="project" value="UniProtKB-UniRule"/>
</dbReference>
<dbReference type="GO" id="GO:0006094">
    <property type="term" value="P:gluconeogenesis"/>
    <property type="evidence" value="ECO:0007669"/>
    <property type="project" value="UniProtKB-UniRule"/>
</dbReference>
<dbReference type="GO" id="GO:0046166">
    <property type="term" value="P:glyceraldehyde-3-phosphate biosynthetic process"/>
    <property type="evidence" value="ECO:0007669"/>
    <property type="project" value="TreeGrafter"/>
</dbReference>
<dbReference type="GO" id="GO:0019563">
    <property type="term" value="P:glycerol catabolic process"/>
    <property type="evidence" value="ECO:0007669"/>
    <property type="project" value="TreeGrafter"/>
</dbReference>
<dbReference type="GO" id="GO:0006096">
    <property type="term" value="P:glycolytic process"/>
    <property type="evidence" value="ECO:0007669"/>
    <property type="project" value="UniProtKB-UniRule"/>
</dbReference>
<dbReference type="CDD" id="cd00311">
    <property type="entry name" value="TIM"/>
    <property type="match status" value="1"/>
</dbReference>
<dbReference type="FunFam" id="3.20.20.70:FF:000016">
    <property type="entry name" value="Triosephosphate isomerase"/>
    <property type="match status" value="1"/>
</dbReference>
<dbReference type="Gene3D" id="3.20.20.70">
    <property type="entry name" value="Aldolase class I"/>
    <property type="match status" value="1"/>
</dbReference>
<dbReference type="HAMAP" id="MF_00147_B">
    <property type="entry name" value="TIM_B"/>
    <property type="match status" value="1"/>
</dbReference>
<dbReference type="InterPro" id="IPR013785">
    <property type="entry name" value="Aldolase_TIM"/>
</dbReference>
<dbReference type="InterPro" id="IPR035990">
    <property type="entry name" value="TIM_sf"/>
</dbReference>
<dbReference type="InterPro" id="IPR022896">
    <property type="entry name" value="TrioseP_Isoase_bac/euk"/>
</dbReference>
<dbReference type="InterPro" id="IPR000652">
    <property type="entry name" value="Triosephosphate_isomerase"/>
</dbReference>
<dbReference type="InterPro" id="IPR020861">
    <property type="entry name" value="Triosephosphate_isomerase_AS"/>
</dbReference>
<dbReference type="NCBIfam" id="TIGR00419">
    <property type="entry name" value="tim"/>
    <property type="match status" value="1"/>
</dbReference>
<dbReference type="PANTHER" id="PTHR21139">
    <property type="entry name" value="TRIOSEPHOSPHATE ISOMERASE"/>
    <property type="match status" value="1"/>
</dbReference>
<dbReference type="PANTHER" id="PTHR21139:SF42">
    <property type="entry name" value="TRIOSEPHOSPHATE ISOMERASE"/>
    <property type="match status" value="1"/>
</dbReference>
<dbReference type="Pfam" id="PF00121">
    <property type="entry name" value="TIM"/>
    <property type="match status" value="1"/>
</dbReference>
<dbReference type="SUPFAM" id="SSF51351">
    <property type="entry name" value="Triosephosphate isomerase (TIM)"/>
    <property type="match status" value="1"/>
</dbReference>
<dbReference type="PROSITE" id="PS00171">
    <property type="entry name" value="TIM_1"/>
    <property type="match status" value="1"/>
</dbReference>
<dbReference type="PROSITE" id="PS51440">
    <property type="entry name" value="TIM_2"/>
    <property type="match status" value="1"/>
</dbReference>
<proteinExistence type="inferred from homology"/>
<reference key="1">
    <citation type="submission" date="2008-06" db="EMBL/GenBank/DDBJ databases">
        <title>Complete sequence of Pelodictyon phaeoclathratiforme BU-1.</title>
        <authorList>
            <consortium name="US DOE Joint Genome Institute"/>
            <person name="Lucas S."/>
            <person name="Copeland A."/>
            <person name="Lapidus A."/>
            <person name="Glavina del Rio T."/>
            <person name="Dalin E."/>
            <person name="Tice H."/>
            <person name="Bruce D."/>
            <person name="Goodwin L."/>
            <person name="Pitluck S."/>
            <person name="Schmutz J."/>
            <person name="Larimer F."/>
            <person name="Land M."/>
            <person name="Hauser L."/>
            <person name="Kyrpides N."/>
            <person name="Mikhailova N."/>
            <person name="Liu Z."/>
            <person name="Li T."/>
            <person name="Zhao F."/>
            <person name="Overmann J."/>
            <person name="Bryant D.A."/>
            <person name="Richardson P."/>
        </authorList>
    </citation>
    <scope>NUCLEOTIDE SEQUENCE [LARGE SCALE GENOMIC DNA]</scope>
    <source>
        <strain>DSM 5477 / BU-1</strain>
    </source>
</reference>